<gene>
    <name evidence="1" type="primary">azoR2</name>
    <name type="ordered locus">Ava_1062</name>
</gene>
<reference key="1">
    <citation type="journal article" date="2014" name="Stand. Genomic Sci.">
        <title>Complete genome sequence of Anabaena variabilis ATCC 29413.</title>
        <authorList>
            <person name="Thiel T."/>
            <person name="Pratte B.S."/>
            <person name="Zhong J."/>
            <person name="Goodwin L."/>
            <person name="Copeland A."/>
            <person name="Lucas S."/>
            <person name="Han C."/>
            <person name="Pitluck S."/>
            <person name="Land M.L."/>
            <person name="Kyrpides N.C."/>
            <person name="Woyke T."/>
        </authorList>
    </citation>
    <scope>NUCLEOTIDE SEQUENCE [LARGE SCALE GENOMIC DNA]</scope>
    <source>
        <strain>ATCC 29413 / PCC 7937</strain>
    </source>
</reference>
<organism>
    <name type="scientific">Trichormus variabilis (strain ATCC 29413 / PCC 7937)</name>
    <name type="common">Anabaena variabilis</name>
    <dbReference type="NCBI Taxonomy" id="240292"/>
    <lineage>
        <taxon>Bacteria</taxon>
        <taxon>Bacillati</taxon>
        <taxon>Cyanobacteriota</taxon>
        <taxon>Cyanophyceae</taxon>
        <taxon>Nostocales</taxon>
        <taxon>Nostocaceae</taxon>
        <taxon>Trichormus</taxon>
    </lineage>
</organism>
<proteinExistence type="inferred from homology"/>
<name>AZOR2_TRIV2</name>
<feature type="chain" id="PRO_0000245871" description="FMN-dependent NADH:quinone oxidoreductase 2">
    <location>
        <begin position="1"/>
        <end position="207"/>
    </location>
</feature>
<feature type="binding site" evidence="1">
    <location>
        <position position="10"/>
    </location>
    <ligand>
        <name>FMN</name>
        <dbReference type="ChEBI" id="CHEBI:58210"/>
    </ligand>
</feature>
<feature type="binding site" evidence="1">
    <location>
        <begin position="16"/>
        <end position="18"/>
    </location>
    <ligand>
        <name>FMN</name>
        <dbReference type="ChEBI" id="CHEBI:58210"/>
    </ligand>
</feature>
<feature type="binding site" evidence="1">
    <location>
        <begin position="96"/>
        <end position="99"/>
    </location>
    <ligand>
        <name>FMN</name>
        <dbReference type="ChEBI" id="CHEBI:58210"/>
    </ligand>
</feature>
<feature type="binding site" evidence="1">
    <location>
        <begin position="141"/>
        <end position="144"/>
    </location>
    <ligand>
        <name>FMN</name>
        <dbReference type="ChEBI" id="CHEBI:58210"/>
    </ligand>
</feature>
<accession>Q3MEA0</accession>
<dbReference type="EC" id="1.6.5.-" evidence="1"/>
<dbReference type="EC" id="1.7.1.17" evidence="1"/>
<dbReference type="EMBL" id="CP000117">
    <property type="protein sequence ID" value="ABA20686.1"/>
    <property type="molecule type" value="Genomic_DNA"/>
</dbReference>
<dbReference type="SMR" id="Q3MEA0"/>
<dbReference type="STRING" id="240292.Ava_1062"/>
<dbReference type="KEGG" id="ava:Ava_1062"/>
<dbReference type="eggNOG" id="COG1182">
    <property type="taxonomic scope" value="Bacteria"/>
</dbReference>
<dbReference type="HOGENOM" id="CLU_088964_0_0_3"/>
<dbReference type="Proteomes" id="UP000002533">
    <property type="component" value="Chromosome"/>
</dbReference>
<dbReference type="GO" id="GO:0009055">
    <property type="term" value="F:electron transfer activity"/>
    <property type="evidence" value="ECO:0007669"/>
    <property type="project" value="UniProtKB-UniRule"/>
</dbReference>
<dbReference type="GO" id="GO:0010181">
    <property type="term" value="F:FMN binding"/>
    <property type="evidence" value="ECO:0007669"/>
    <property type="project" value="UniProtKB-UniRule"/>
</dbReference>
<dbReference type="GO" id="GO:0016652">
    <property type="term" value="F:oxidoreductase activity, acting on NAD(P)H as acceptor"/>
    <property type="evidence" value="ECO:0007669"/>
    <property type="project" value="UniProtKB-UniRule"/>
</dbReference>
<dbReference type="GO" id="GO:0016655">
    <property type="term" value="F:oxidoreductase activity, acting on NAD(P)H, quinone or similar compound as acceptor"/>
    <property type="evidence" value="ECO:0007669"/>
    <property type="project" value="InterPro"/>
</dbReference>
<dbReference type="Gene3D" id="3.40.50.360">
    <property type="match status" value="1"/>
</dbReference>
<dbReference type="HAMAP" id="MF_01216">
    <property type="entry name" value="Azoreductase_type1"/>
    <property type="match status" value="1"/>
</dbReference>
<dbReference type="InterPro" id="IPR003680">
    <property type="entry name" value="Flavodoxin_fold"/>
</dbReference>
<dbReference type="InterPro" id="IPR029039">
    <property type="entry name" value="Flavoprotein-like_sf"/>
</dbReference>
<dbReference type="InterPro" id="IPR050104">
    <property type="entry name" value="FMN-dep_NADH:Q_OxRdtase_AzoR1"/>
</dbReference>
<dbReference type="InterPro" id="IPR023048">
    <property type="entry name" value="NADH:quinone_OxRdtase_FMN_depd"/>
</dbReference>
<dbReference type="PANTHER" id="PTHR43741">
    <property type="entry name" value="FMN-DEPENDENT NADH-AZOREDUCTASE 1"/>
    <property type="match status" value="1"/>
</dbReference>
<dbReference type="PANTHER" id="PTHR43741:SF4">
    <property type="entry name" value="FMN-DEPENDENT NADH:QUINONE OXIDOREDUCTASE"/>
    <property type="match status" value="1"/>
</dbReference>
<dbReference type="Pfam" id="PF02525">
    <property type="entry name" value="Flavodoxin_2"/>
    <property type="match status" value="1"/>
</dbReference>
<dbReference type="SUPFAM" id="SSF52218">
    <property type="entry name" value="Flavoproteins"/>
    <property type="match status" value="1"/>
</dbReference>
<evidence type="ECO:0000255" key="1">
    <source>
        <dbReference type="HAMAP-Rule" id="MF_01216"/>
    </source>
</evidence>
<protein>
    <recommendedName>
        <fullName evidence="1">FMN-dependent NADH:quinone oxidoreductase 2</fullName>
        <ecNumber evidence="1">1.6.5.-</ecNumber>
    </recommendedName>
    <alternativeName>
        <fullName evidence="1">Azo-dye reductase 2</fullName>
    </alternativeName>
    <alternativeName>
        <fullName evidence="1">FMN-dependent NADH-azo compound oxidoreductase 2</fullName>
    </alternativeName>
    <alternativeName>
        <fullName evidence="1">FMN-dependent NADH-azoreductase 2</fullName>
        <ecNumber evidence="1">1.7.1.17</ecNumber>
    </alternativeName>
</protein>
<keyword id="KW-0285">Flavoprotein</keyword>
<keyword id="KW-0288">FMN</keyword>
<keyword id="KW-0520">NAD</keyword>
<keyword id="KW-0560">Oxidoreductase</keyword>
<sequence>MANILHIDSSPRGDRSISRKLSYEFLTSWKDTHPGDTVTYRDLGHNPVPHVDEPWIAAAFSSPDSHTPELKAAIELSDTLIDEFLAADRFVFGVPMYNLNIPSTFKAYIDQIVRVGRTFSVDANGYKGLVDSSKKVLIITSRGGSYPPGTPYAAYDYQEPYLRAILGFMGLTDVTFIHAESLNMGEDAREKSLADAKDAIAQAVANW</sequence>
<comment type="function">
    <text evidence="1">Quinone reductase that provides resistance to thiol-specific stress caused by electrophilic quinones.</text>
</comment>
<comment type="function">
    <text evidence="1">Also exhibits azoreductase activity. Catalyzes the reductive cleavage of the azo bond in aromatic azo compounds to the corresponding amines.</text>
</comment>
<comment type="catalytic activity">
    <reaction evidence="1">
        <text>2 a quinone + NADH + H(+) = 2 a 1,4-benzosemiquinone + NAD(+)</text>
        <dbReference type="Rhea" id="RHEA:65952"/>
        <dbReference type="ChEBI" id="CHEBI:15378"/>
        <dbReference type="ChEBI" id="CHEBI:57540"/>
        <dbReference type="ChEBI" id="CHEBI:57945"/>
        <dbReference type="ChEBI" id="CHEBI:132124"/>
        <dbReference type="ChEBI" id="CHEBI:134225"/>
    </reaction>
</comment>
<comment type="catalytic activity">
    <reaction evidence="1">
        <text>N,N-dimethyl-1,4-phenylenediamine + anthranilate + 2 NAD(+) = 2-(4-dimethylaminophenyl)diazenylbenzoate + 2 NADH + 2 H(+)</text>
        <dbReference type="Rhea" id="RHEA:55872"/>
        <dbReference type="ChEBI" id="CHEBI:15378"/>
        <dbReference type="ChEBI" id="CHEBI:15783"/>
        <dbReference type="ChEBI" id="CHEBI:16567"/>
        <dbReference type="ChEBI" id="CHEBI:57540"/>
        <dbReference type="ChEBI" id="CHEBI:57945"/>
        <dbReference type="ChEBI" id="CHEBI:71579"/>
        <dbReference type="EC" id="1.7.1.17"/>
    </reaction>
</comment>
<comment type="cofactor">
    <cofactor evidence="1">
        <name>FMN</name>
        <dbReference type="ChEBI" id="CHEBI:58210"/>
    </cofactor>
    <text evidence="1">Binds 1 FMN per subunit.</text>
</comment>
<comment type="subunit">
    <text evidence="1">Homodimer.</text>
</comment>
<comment type="similarity">
    <text evidence="1">Belongs to the azoreductase type 1 family.</text>
</comment>